<organism>
    <name type="scientific">Xenopus laevis</name>
    <name type="common">African clawed frog</name>
    <dbReference type="NCBI Taxonomy" id="8355"/>
    <lineage>
        <taxon>Eukaryota</taxon>
        <taxon>Metazoa</taxon>
        <taxon>Chordata</taxon>
        <taxon>Craniata</taxon>
        <taxon>Vertebrata</taxon>
        <taxon>Euteleostomi</taxon>
        <taxon>Amphibia</taxon>
        <taxon>Batrachia</taxon>
        <taxon>Anura</taxon>
        <taxon>Pipoidea</taxon>
        <taxon>Pipidae</taxon>
        <taxon>Xenopodinae</taxon>
        <taxon>Xenopus</taxon>
        <taxon>Xenopus</taxon>
    </lineage>
</organism>
<evidence type="ECO:0000250" key="1"/>
<evidence type="ECO:0000250" key="2">
    <source>
        <dbReference type="UniProtKB" id="P70096"/>
    </source>
</evidence>
<evidence type="ECO:0000250" key="3">
    <source>
        <dbReference type="UniProtKB" id="Q99661"/>
    </source>
</evidence>
<evidence type="ECO:0000255" key="4"/>
<evidence type="ECO:0000255" key="5">
    <source>
        <dbReference type="PROSITE-ProRule" id="PRU00283"/>
    </source>
</evidence>
<evidence type="ECO:0000256" key="6">
    <source>
        <dbReference type="SAM" id="MobiDB-lite"/>
    </source>
</evidence>
<evidence type="ECO:0000269" key="7">
    <source>
    </source>
</evidence>
<evidence type="ECO:0000269" key="8">
    <source>
    </source>
</evidence>
<keyword id="KW-0067">ATP-binding</keyword>
<keyword id="KW-0131">Cell cycle</keyword>
<keyword id="KW-0132">Cell division</keyword>
<keyword id="KW-0137">Centromere</keyword>
<keyword id="KW-0158">Chromosome</keyword>
<keyword id="KW-0159">Chromosome partition</keyword>
<keyword id="KW-0175">Coiled coil</keyword>
<keyword id="KW-0963">Cytoplasm</keyword>
<keyword id="KW-0206">Cytoskeleton</keyword>
<keyword id="KW-0995">Kinetochore</keyword>
<keyword id="KW-0493">Microtubule</keyword>
<keyword id="KW-0498">Mitosis</keyword>
<keyword id="KW-0547">Nucleotide-binding</keyword>
<keyword id="KW-0539">Nucleus</keyword>
<keyword id="KW-1185">Reference proteome</keyword>
<gene>
    <name type="primary">kif2c</name>
    <name type="synonym">kcm1</name>
</gene>
<protein>
    <recommendedName>
        <fullName>Kinesin-like protein KIF2C</fullName>
    </recommendedName>
    <alternativeName>
        <fullName>Kinesin central motor 1</fullName>
        <shortName>xKCM1</shortName>
    </alternativeName>
</protein>
<comment type="function">
    <text evidence="3 8">Promotes ATP-dependent removal of tubulin dimers from microtubules. Regulates the turnover of microtubules at the kinetochore and functions in chromosome segregation during mitosis (PubMed:8548824). May play a role in chromosome congression and may be required for the lateral to end-on conversion of the chromosome-microtubule attachment (By similarity).</text>
</comment>
<comment type="subcellular location">
    <subcellularLocation>
        <location evidence="3">Cytoplasm</location>
        <location evidence="3">Cytoskeleton</location>
    </subcellularLocation>
    <subcellularLocation>
        <location evidence="2">Nucleus</location>
    </subcellularLocation>
    <subcellularLocation>
        <location evidence="7 8">Chromosome</location>
        <location evidence="7 8">Centromere</location>
    </subcellularLocation>
    <subcellularLocation>
        <location evidence="7 8">Chromosome</location>
        <location evidence="7 8">Centromere</location>
        <location evidence="7 8">Kinetochore</location>
    </subcellularLocation>
</comment>
<comment type="similarity">
    <text evidence="5">Belongs to the TRAFAC class myosin-kinesin ATPase superfamily. Kinesin family. MCAK/KIF2 subfamily.</text>
</comment>
<name>KIF2C_XENLA</name>
<feature type="chain" id="PRO_0000125422" description="Kinesin-like protein KIF2C">
    <location>
        <begin position="1"/>
        <end position="730"/>
    </location>
</feature>
<feature type="domain" description="Kinesin motor" evidence="5">
    <location>
        <begin position="262"/>
        <end position="592"/>
    </location>
</feature>
<feature type="region of interest" description="Globular" evidence="4">
    <location>
        <begin position="1"/>
        <end position="256"/>
    </location>
</feature>
<feature type="region of interest" description="Disordered" evidence="6">
    <location>
        <begin position="79"/>
        <end position="98"/>
    </location>
</feature>
<feature type="region of interest" description="Negative regulator of microtubule-binding" evidence="1">
    <location>
        <begin position="211"/>
        <end position="242"/>
    </location>
</feature>
<feature type="coiled-coil region" evidence="4">
    <location>
        <begin position="599"/>
        <end position="730"/>
    </location>
</feature>
<feature type="binding site" evidence="1">
    <location>
        <position position="268"/>
    </location>
    <ligand>
        <name>ATP</name>
        <dbReference type="ChEBI" id="CHEBI:30616"/>
    </ligand>
</feature>
<feature type="binding site" evidence="5">
    <location>
        <begin position="352"/>
        <end position="359"/>
    </location>
    <ligand>
        <name>ATP</name>
        <dbReference type="ChEBI" id="CHEBI:30616"/>
    </ligand>
</feature>
<reference key="1">
    <citation type="journal article" date="1996" name="Cell">
        <title>XKCM1: a Xenopus kinesin-related protein that regulates microtubule dynamics during mitotic spindle assembly.</title>
        <authorList>
            <person name="Walczak C.E."/>
            <person name="Mitchison T.J."/>
            <person name="Desai A."/>
        </authorList>
    </citation>
    <scope>NUCLEOTIDE SEQUENCE [MRNA]</scope>
    <scope>SUBCELLULAR LOCATION</scope>
    <scope>FUNCTION</scope>
    <source>
        <tissue>Ovary</tissue>
    </source>
</reference>
<reference key="2">
    <citation type="submission" date="2000-06" db="EMBL/GenBank/DDBJ databases">
        <authorList>
            <person name="Walczak C.E."/>
        </authorList>
    </citation>
    <scope>SEQUENCE REVISION TO 516</scope>
</reference>
<reference key="3">
    <citation type="submission" date="2003-01" db="EMBL/GenBank/DDBJ databases">
        <authorList>
            <consortium name="NIH - Xenopus Gene Collection (XGC) project"/>
        </authorList>
    </citation>
    <scope>NUCLEOTIDE SEQUENCE [LARGE SCALE MRNA]</scope>
    <source>
        <tissue>Embryo</tissue>
    </source>
</reference>
<reference key="4">
    <citation type="journal article" date="2003" name="Dev. Cell">
        <title>An inner centromere protein that stimulates the microtubule depolymerizing activity of a KinI kinesin.</title>
        <authorList>
            <person name="Ohi R."/>
            <person name="Coughlin M.L."/>
            <person name="Lane W.S."/>
            <person name="Mitchison T.J."/>
        </authorList>
    </citation>
    <scope>INTERACTION WITH MTUS1</scope>
    <scope>SUBCELLULAR LOCATION</scope>
    <scope>IDENTIFICATION BY MASS SPECTROMETRY</scope>
</reference>
<proteinExistence type="evidence at protein level"/>
<dbReference type="EMBL" id="U36485">
    <property type="protein sequence ID" value="AAC59743.2"/>
    <property type="molecule type" value="mRNA"/>
</dbReference>
<dbReference type="EMBL" id="BC044976">
    <property type="protein sequence ID" value="AAH44976.1"/>
    <property type="molecule type" value="mRNA"/>
</dbReference>
<dbReference type="RefSeq" id="NP_001080314.1">
    <property type="nucleotide sequence ID" value="NM_001086845.1"/>
</dbReference>
<dbReference type="SMR" id="Q91636"/>
<dbReference type="BioGRID" id="98248">
    <property type="interactions" value="1"/>
</dbReference>
<dbReference type="IntAct" id="Q91636">
    <property type="interactions" value="2"/>
</dbReference>
<dbReference type="iPTMnet" id="Q91636"/>
<dbReference type="DNASU" id="380006"/>
<dbReference type="GeneID" id="380006"/>
<dbReference type="KEGG" id="xla:380006"/>
<dbReference type="AGR" id="Xenbase:XB-GENE-961451"/>
<dbReference type="CTD" id="380006"/>
<dbReference type="Xenbase" id="XB-GENE-961451">
    <property type="gene designation" value="kif2c.S"/>
</dbReference>
<dbReference type="OrthoDB" id="3176171at2759"/>
<dbReference type="Proteomes" id="UP000186698">
    <property type="component" value="Chromosome 4S"/>
</dbReference>
<dbReference type="Bgee" id="380006">
    <property type="expression patterns" value="Expressed in egg cell and 16 other cell types or tissues"/>
</dbReference>
<dbReference type="GO" id="GO:0005737">
    <property type="term" value="C:cytoplasm"/>
    <property type="evidence" value="ECO:0007669"/>
    <property type="project" value="UniProtKB-KW"/>
</dbReference>
<dbReference type="GO" id="GO:0000776">
    <property type="term" value="C:kinetochore"/>
    <property type="evidence" value="ECO:0000250"/>
    <property type="project" value="UniProtKB"/>
</dbReference>
<dbReference type="GO" id="GO:0005874">
    <property type="term" value="C:microtubule"/>
    <property type="evidence" value="ECO:0000318"/>
    <property type="project" value="GO_Central"/>
</dbReference>
<dbReference type="GO" id="GO:0035371">
    <property type="term" value="C:microtubule plus-end"/>
    <property type="evidence" value="ECO:0000250"/>
    <property type="project" value="UniProtKB"/>
</dbReference>
<dbReference type="GO" id="GO:0005634">
    <property type="term" value="C:nucleus"/>
    <property type="evidence" value="ECO:0007669"/>
    <property type="project" value="UniProtKB-SubCell"/>
</dbReference>
<dbReference type="GO" id="GO:0005524">
    <property type="term" value="F:ATP binding"/>
    <property type="evidence" value="ECO:0007669"/>
    <property type="project" value="UniProtKB-KW"/>
</dbReference>
<dbReference type="GO" id="GO:0008017">
    <property type="term" value="F:microtubule binding"/>
    <property type="evidence" value="ECO:0007669"/>
    <property type="project" value="InterPro"/>
</dbReference>
<dbReference type="GO" id="GO:0003777">
    <property type="term" value="F:microtubule motor activity"/>
    <property type="evidence" value="ECO:0000318"/>
    <property type="project" value="GO_Central"/>
</dbReference>
<dbReference type="GO" id="GO:0051315">
    <property type="term" value="P:attachment of mitotic spindle microtubules to kinetochore"/>
    <property type="evidence" value="ECO:0000250"/>
    <property type="project" value="UniProtKB"/>
</dbReference>
<dbReference type="GO" id="GO:0051301">
    <property type="term" value="P:cell division"/>
    <property type="evidence" value="ECO:0007669"/>
    <property type="project" value="UniProtKB-KW"/>
</dbReference>
<dbReference type="GO" id="GO:0051310">
    <property type="term" value="P:metaphase chromosome alignment"/>
    <property type="evidence" value="ECO:0000250"/>
    <property type="project" value="UniProtKB"/>
</dbReference>
<dbReference type="GO" id="GO:0007019">
    <property type="term" value="P:microtubule depolymerization"/>
    <property type="evidence" value="ECO:0000318"/>
    <property type="project" value="GO_Central"/>
</dbReference>
<dbReference type="GO" id="GO:0007018">
    <property type="term" value="P:microtubule-based movement"/>
    <property type="evidence" value="ECO:0007669"/>
    <property type="project" value="InterPro"/>
</dbReference>
<dbReference type="CDD" id="cd01367">
    <property type="entry name" value="KISc_KIF2_like"/>
    <property type="match status" value="1"/>
</dbReference>
<dbReference type="FunFam" id="3.40.850.10:FF:000006">
    <property type="entry name" value="Kinesin-like protein"/>
    <property type="match status" value="1"/>
</dbReference>
<dbReference type="Gene3D" id="3.40.850.10">
    <property type="entry name" value="Kinesin motor domain"/>
    <property type="match status" value="1"/>
</dbReference>
<dbReference type="InterPro" id="IPR054473">
    <property type="entry name" value="KIF2A-like_N"/>
</dbReference>
<dbReference type="InterPro" id="IPR027640">
    <property type="entry name" value="Kinesin-like_fam"/>
</dbReference>
<dbReference type="InterPro" id="IPR019821">
    <property type="entry name" value="Kinesin_motor_CS"/>
</dbReference>
<dbReference type="InterPro" id="IPR001752">
    <property type="entry name" value="Kinesin_motor_dom"/>
</dbReference>
<dbReference type="InterPro" id="IPR036961">
    <property type="entry name" value="Kinesin_motor_dom_sf"/>
</dbReference>
<dbReference type="InterPro" id="IPR027417">
    <property type="entry name" value="P-loop_NTPase"/>
</dbReference>
<dbReference type="PANTHER" id="PTHR47971:SF25">
    <property type="entry name" value="KINESIN-LIKE PROTEIN KIF2C"/>
    <property type="match status" value="1"/>
</dbReference>
<dbReference type="PANTHER" id="PTHR47971">
    <property type="entry name" value="KINESIN-RELATED PROTEIN 6"/>
    <property type="match status" value="1"/>
</dbReference>
<dbReference type="Pfam" id="PF22923">
    <property type="entry name" value="KIF2A-like_1st"/>
    <property type="match status" value="1"/>
</dbReference>
<dbReference type="Pfam" id="PF00225">
    <property type="entry name" value="Kinesin"/>
    <property type="match status" value="1"/>
</dbReference>
<dbReference type="PRINTS" id="PR00380">
    <property type="entry name" value="KINESINHEAVY"/>
</dbReference>
<dbReference type="SMART" id="SM00129">
    <property type="entry name" value="KISc"/>
    <property type="match status" value="1"/>
</dbReference>
<dbReference type="SUPFAM" id="SSF52540">
    <property type="entry name" value="P-loop containing nucleoside triphosphate hydrolases"/>
    <property type="match status" value="1"/>
</dbReference>
<dbReference type="PROSITE" id="PS00411">
    <property type="entry name" value="KINESIN_MOTOR_1"/>
    <property type="match status" value="1"/>
</dbReference>
<dbReference type="PROSITE" id="PS50067">
    <property type="entry name" value="KINESIN_MOTOR_2"/>
    <property type="match status" value="1"/>
</dbReference>
<accession>Q91636</accession>
<accession>Q5D0B4</accession>
<sequence>MERLVATRLVTGLAVKIMRSNGVIHNANITSVNMDRSSVNVEWKEGEANKGKEISFADVISVNPELLDAVLAPTNVKENMPPQRNVSSQNHKRKTISKIPAPKEVAAKNSLLSESGAQSVLRERSTRMTAIHETLPYENEMEAESTPLPIQQNSVQARSRSTKVSIAEEPRLQTRISEIVEESLPSGRNNQGRRKSNIVKEMEKMKNKREEQRAQNYERRMKRAQDYDTSVPNWEFGKMIKEFRATMDCHRISMADPAEEHRICVCVRKRPLNKQELSKKEIDIISVPSKNIVLVHEPKLKVDLTKYLENQAFRFDFSFDETATNEVVYRFTARPLVQSIFEGGKATCFAYGQTGSGKTHTMGGDFSGKSQNVSKGVYAFASRDVFLLLDQPRYKHLDLDVFVTFFEIYNGKVFDLLNKKTKLRVLEDAKQEVQVVGLLEKQVISADDVFKMIEIGSACRTSGQTFANTSSSRSHACLQIILRRGSKLHGKFSLVDLAGNERGVDTASADRITRMEGAEINRSLLALKECIRALGQNKSHTPFRESKLTQILRDSFIGENSRTCMIAMLSPGFNSCEYTLNTLRYADRVKELSPQNAETNDDNLQMEDSGGSHASIEGLQLQDDFLLKDEELSTHNSFQDALNRVGELEDKAVDELRELVQKEPEWTNLLQMTEQPDYDLENFVMQAEYLIQERSKVLIALGDSINSLRLALQVEEQASKQISKKKRSNK</sequence>